<dbReference type="EMBL" id="BA000030">
    <property type="protein sequence ID" value="BAC72653.1"/>
    <property type="molecule type" value="Genomic_DNA"/>
</dbReference>
<dbReference type="RefSeq" id="WP_010986353.1">
    <property type="nucleotide sequence ID" value="NZ_JZJK01000077.1"/>
</dbReference>
<dbReference type="SMR" id="Q82DN1"/>
<dbReference type="GeneID" id="41542024"/>
<dbReference type="KEGG" id="sma:SAVERM_4941"/>
<dbReference type="eggNOG" id="COG0097">
    <property type="taxonomic scope" value="Bacteria"/>
</dbReference>
<dbReference type="HOGENOM" id="CLU_065464_1_2_11"/>
<dbReference type="OrthoDB" id="9805007at2"/>
<dbReference type="Proteomes" id="UP000000428">
    <property type="component" value="Chromosome"/>
</dbReference>
<dbReference type="GO" id="GO:0022625">
    <property type="term" value="C:cytosolic large ribosomal subunit"/>
    <property type="evidence" value="ECO:0007669"/>
    <property type="project" value="TreeGrafter"/>
</dbReference>
<dbReference type="GO" id="GO:0019843">
    <property type="term" value="F:rRNA binding"/>
    <property type="evidence" value="ECO:0007669"/>
    <property type="project" value="UniProtKB-UniRule"/>
</dbReference>
<dbReference type="GO" id="GO:0003735">
    <property type="term" value="F:structural constituent of ribosome"/>
    <property type="evidence" value="ECO:0007669"/>
    <property type="project" value="InterPro"/>
</dbReference>
<dbReference type="GO" id="GO:0002181">
    <property type="term" value="P:cytoplasmic translation"/>
    <property type="evidence" value="ECO:0007669"/>
    <property type="project" value="TreeGrafter"/>
</dbReference>
<dbReference type="FunFam" id="3.90.930.12:FF:000001">
    <property type="entry name" value="50S ribosomal protein L6"/>
    <property type="match status" value="1"/>
</dbReference>
<dbReference type="FunFam" id="3.90.930.12:FF:000002">
    <property type="entry name" value="50S ribosomal protein L6"/>
    <property type="match status" value="1"/>
</dbReference>
<dbReference type="Gene3D" id="3.90.930.12">
    <property type="entry name" value="Ribosomal protein L6, alpha-beta domain"/>
    <property type="match status" value="2"/>
</dbReference>
<dbReference type="HAMAP" id="MF_01365_B">
    <property type="entry name" value="Ribosomal_uL6_B"/>
    <property type="match status" value="1"/>
</dbReference>
<dbReference type="InterPro" id="IPR000702">
    <property type="entry name" value="Ribosomal_uL6-like"/>
</dbReference>
<dbReference type="InterPro" id="IPR036789">
    <property type="entry name" value="Ribosomal_uL6-like_a/b-dom_sf"/>
</dbReference>
<dbReference type="InterPro" id="IPR020040">
    <property type="entry name" value="Ribosomal_uL6_a/b-dom"/>
</dbReference>
<dbReference type="InterPro" id="IPR019906">
    <property type="entry name" value="Ribosomal_uL6_bac-type"/>
</dbReference>
<dbReference type="InterPro" id="IPR002358">
    <property type="entry name" value="Ribosomal_uL6_CS"/>
</dbReference>
<dbReference type="NCBIfam" id="TIGR03654">
    <property type="entry name" value="L6_bact"/>
    <property type="match status" value="1"/>
</dbReference>
<dbReference type="PANTHER" id="PTHR11655">
    <property type="entry name" value="60S/50S RIBOSOMAL PROTEIN L6/L9"/>
    <property type="match status" value="1"/>
</dbReference>
<dbReference type="PANTHER" id="PTHR11655:SF14">
    <property type="entry name" value="LARGE RIBOSOMAL SUBUNIT PROTEIN UL6M"/>
    <property type="match status" value="1"/>
</dbReference>
<dbReference type="Pfam" id="PF00347">
    <property type="entry name" value="Ribosomal_L6"/>
    <property type="match status" value="2"/>
</dbReference>
<dbReference type="PIRSF" id="PIRSF002162">
    <property type="entry name" value="Ribosomal_L6"/>
    <property type="match status" value="1"/>
</dbReference>
<dbReference type="PRINTS" id="PR00059">
    <property type="entry name" value="RIBOSOMALL6"/>
</dbReference>
<dbReference type="SUPFAM" id="SSF56053">
    <property type="entry name" value="Ribosomal protein L6"/>
    <property type="match status" value="2"/>
</dbReference>
<dbReference type="PROSITE" id="PS00525">
    <property type="entry name" value="RIBOSOMAL_L6_1"/>
    <property type="match status" value="1"/>
</dbReference>
<reference key="1">
    <citation type="journal article" date="2001" name="Proc. Natl. Acad. Sci. U.S.A.">
        <title>Genome sequence of an industrial microorganism Streptomyces avermitilis: deducing the ability of producing secondary metabolites.</title>
        <authorList>
            <person name="Omura S."/>
            <person name="Ikeda H."/>
            <person name="Ishikawa J."/>
            <person name="Hanamoto A."/>
            <person name="Takahashi C."/>
            <person name="Shinose M."/>
            <person name="Takahashi Y."/>
            <person name="Horikawa H."/>
            <person name="Nakazawa H."/>
            <person name="Osonoe T."/>
            <person name="Kikuchi H."/>
            <person name="Shiba T."/>
            <person name="Sakaki Y."/>
            <person name="Hattori M."/>
        </authorList>
    </citation>
    <scope>NUCLEOTIDE SEQUENCE [LARGE SCALE GENOMIC DNA]</scope>
    <source>
        <strain>ATCC 31267 / DSM 46492 / JCM 5070 / NBRC 14893 / NCIMB 12804 / NRRL 8165 / MA-4680</strain>
    </source>
</reference>
<reference key="2">
    <citation type="journal article" date="2003" name="Nat. Biotechnol.">
        <title>Complete genome sequence and comparative analysis of the industrial microorganism Streptomyces avermitilis.</title>
        <authorList>
            <person name="Ikeda H."/>
            <person name="Ishikawa J."/>
            <person name="Hanamoto A."/>
            <person name="Shinose M."/>
            <person name="Kikuchi H."/>
            <person name="Shiba T."/>
            <person name="Sakaki Y."/>
            <person name="Hattori M."/>
            <person name="Omura S."/>
        </authorList>
    </citation>
    <scope>NUCLEOTIDE SEQUENCE [LARGE SCALE GENOMIC DNA]</scope>
    <source>
        <strain>ATCC 31267 / DSM 46492 / JCM 5070 / NBRC 14893 / NCIMB 12804 / NRRL 8165 / MA-4680</strain>
    </source>
</reference>
<comment type="function">
    <text evidence="1">This protein binds to the 23S rRNA, and is important in its secondary structure. It is located near the subunit interface in the base of the L7/L12 stalk, and near the tRNA binding site of the peptidyltransferase center.</text>
</comment>
<comment type="subunit">
    <text evidence="1">Part of the 50S ribosomal subunit.</text>
</comment>
<comment type="similarity">
    <text evidence="1">Belongs to the universal ribosomal protein uL6 family.</text>
</comment>
<feature type="chain" id="PRO_0000260957" description="Large ribosomal subunit protein uL6">
    <location>
        <begin position="1"/>
        <end position="179"/>
    </location>
</feature>
<sequence>MSRIGKLPITVPAGVDVTIDGRTVQVKGPKGSLSHTIAAPIEIAKGEDGVLNVTRPNDERQNKALHGLSRTLVANMITGVTQGYVKKLEISGVGYRVLAKGSNLEFSLGYSHSITVEAPEGITFKVEAPTRFSVEGIDKQKVGEVAANIRKLRKPDPYKAKGVKYEGEVIRRKVGKAGK</sequence>
<accession>Q82DN1</accession>
<evidence type="ECO:0000255" key="1">
    <source>
        <dbReference type="HAMAP-Rule" id="MF_01365"/>
    </source>
</evidence>
<evidence type="ECO:0000305" key="2"/>
<proteinExistence type="inferred from homology"/>
<gene>
    <name evidence="1" type="primary">rplF</name>
    <name type="ordered locus">SAV_4941</name>
</gene>
<keyword id="KW-1185">Reference proteome</keyword>
<keyword id="KW-0687">Ribonucleoprotein</keyword>
<keyword id="KW-0689">Ribosomal protein</keyword>
<keyword id="KW-0694">RNA-binding</keyword>
<keyword id="KW-0699">rRNA-binding</keyword>
<protein>
    <recommendedName>
        <fullName evidence="1">Large ribosomal subunit protein uL6</fullName>
    </recommendedName>
    <alternativeName>
        <fullName evidence="2">50S ribosomal protein L6</fullName>
    </alternativeName>
</protein>
<name>RL6_STRAW</name>
<organism>
    <name type="scientific">Streptomyces avermitilis (strain ATCC 31267 / DSM 46492 / JCM 5070 / NBRC 14893 / NCIMB 12804 / NRRL 8165 / MA-4680)</name>
    <dbReference type="NCBI Taxonomy" id="227882"/>
    <lineage>
        <taxon>Bacteria</taxon>
        <taxon>Bacillati</taxon>
        <taxon>Actinomycetota</taxon>
        <taxon>Actinomycetes</taxon>
        <taxon>Kitasatosporales</taxon>
        <taxon>Streptomycetaceae</taxon>
        <taxon>Streptomyces</taxon>
    </lineage>
</organism>